<comment type="function">
    <text evidence="1">This protein is located at the 30S-50S ribosomal subunit interface and may play a role in the structure and function of the aminoacyl-tRNA binding site.</text>
</comment>
<comment type="similarity">
    <text evidence="2">Belongs to the bacterial ribosomal protein bL19 family.</text>
</comment>
<keyword id="KW-0687">Ribonucleoprotein</keyword>
<keyword id="KW-0689">Ribosomal protein</keyword>
<evidence type="ECO:0000250" key="1"/>
<evidence type="ECO:0000305" key="2"/>
<accession>Q9PL11</accession>
<name>RL19_CHLMU</name>
<sequence>MGNLIKELQDEQCRTDLVDFCVGDTIRVATNISEGGKERVQVFQGTVMARKGGGAGETVSLHRVAYGEGMEKSFLLNSPKVVSIEVVKRGKVSRARLFYLRGKTGKAAKVKELIGPRAAKK</sequence>
<protein>
    <recommendedName>
        <fullName evidence="2">Large ribosomal subunit protein bL19</fullName>
    </recommendedName>
    <alternativeName>
        <fullName>50S ribosomal protein L19</fullName>
    </alternativeName>
</protein>
<reference key="1">
    <citation type="journal article" date="2000" name="Nucleic Acids Res.">
        <title>Genome sequences of Chlamydia trachomatis MoPn and Chlamydia pneumoniae AR39.</title>
        <authorList>
            <person name="Read T.D."/>
            <person name="Brunham R.C."/>
            <person name="Shen C."/>
            <person name="Gill S.R."/>
            <person name="Heidelberg J.F."/>
            <person name="White O."/>
            <person name="Hickey E.K."/>
            <person name="Peterson J.D."/>
            <person name="Utterback T.R."/>
            <person name="Berry K.J."/>
            <person name="Bass S."/>
            <person name="Linher K.D."/>
            <person name="Weidman J.F."/>
            <person name="Khouri H.M."/>
            <person name="Craven B."/>
            <person name="Bowman C."/>
            <person name="Dodson R.J."/>
            <person name="Gwinn M.L."/>
            <person name="Nelson W.C."/>
            <person name="DeBoy R.T."/>
            <person name="Kolonay J.F."/>
            <person name="McClarty G."/>
            <person name="Salzberg S.L."/>
            <person name="Eisen J.A."/>
            <person name="Fraser C.M."/>
        </authorList>
    </citation>
    <scope>NUCLEOTIDE SEQUENCE [LARGE SCALE GENOMIC DNA]</scope>
    <source>
        <strain>MoPn / Nigg</strain>
    </source>
</reference>
<proteinExistence type="inferred from homology"/>
<gene>
    <name type="primary">rplS</name>
    <name type="ordered locus">TC_0297</name>
</gene>
<dbReference type="EMBL" id="AE002160">
    <property type="protein sequence ID" value="AAF39163.1"/>
    <property type="molecule type" value="Genomic_DNA"/>
</dbReference>
<dbReference type="PIR" id="E81718">
    <property type="entry name" value="E81718"/>
</dbReference>
<dbReference type="RefSeq" id="WP_010230075.1">
    <property type="nucleotide sequence ID" value="NZ_CP063055.1"/>
</dbReference>
<dbReference type="SMR" id="Q9PL11"/>
<dbReference type="GeneID" id="1246467"/>
<dbReference type="KEGG" id="cmu:TC_0297"/>
<dbReference type="eggNOG" id="COG0335">
    <property type="taxonomic scope" value="Bacteria"/>
</dbReference>
<dbReference type="HOGENOM" id="CLU_103507_2_1_0"/>
<dbReference type="OrthoDB" id="9803541at2"/>
<dbReference type="Proteomes" id="UP000000800">
    <property type="component" value="Chromosome"/>
</dbReference>
<dbReference type="GO" id="GO:0022625">
    <property type="term" value="C:cytosolic large ribosomal subunit"/>
    <property type="evidence" value="ECO:0007669"/>
    <property type="project" value="TreeGrafter"/>
</dbReference>
<dbReference type="GO" id="GO:0003735">
    <property type="term" value="F:structural constituent of ribosome"/>
    <property type="evidence" value="ECO:0007669"/>
    <property type="project" value="InterPro"/>
</dbReference>
<dbReference type="GO" id="GO:0006412">
    <property type="term" value="P:translation"/>
    <property type="evidence" value="ECO:0007669"/>
    <property type="project" value="UniProtKB-UniRule"/>
</dbReference>
<dbReference type="Gene3D" id="2.30.30.790">
    <property type="match status" value="1"/>
</dbReference>
<dbReference type="HAMAP" id="MF_00402">
    <property type="entry name" value="Ribosomal_bL19"/>
    <property type="match status" value="1"/>
</dbReference>
<dbReference type="InterPro" id="IPR001857">
    <property type="entry name" value="Ribosomal_bL19"/>
</dbReference>
<dbReference type="InterPro" id="IPR018257">
    <property type="entry name" value="Ribosomal_bL19_CS"/>
</dbReference>
<dbReference type="InterPro" id="IPR038657">
    <property type="entry name" value="Ribosomal_bL19_sf"/>
</dbReference>
<dbReference type="InterPro" id="IPR008991">
    <property type="entry name" value="Translation_prot_SH3-like_sf"/>
</dbReference>
<dbReference type="NCBIfam" id="TIGR01024">
    <property type="entry name" value="rplS_bact"/>
    <property type="match status" value="1"/>
</dbReference>
<dbReference type="PANTHER" id="PTHR15680:SF9">
    <property type="entry name" value="LARGE RIBOSOMAL SUBUNIT PROTEIN BL19M"/>
    <property type="match status" value="1"/>
</dbReference>
<dbReference type="PANTHER" id="PTHR15680">
    <property type="entry name" value="RIBOSOMAL PROTEIN L19"/>
    <property type="match status" value="1"/>
</dbReference>
<dbReference type="Pfam" id="PF01245">
    <property type="entry name" value="Ribosomal_L19"/>
    <property type="match status" value="1"/>
</dbReference>
<dbReference type="PIRSF" id="PIRSF002191">
    <property type="entry name" value="Ribosomal_L19"/>
    <property type="match status" value="1"/>
</dbReference>
<dbReference type="PRINTS" id="PR00061">
    <property type="entry name" value="RIBOSOMALL19"/>
</dbReference>
<dbReference type="SUPFAM" id="SSF50104">
    <property type="entry name" value="Translation proteins SH3-like domain"/>
    <property type="match status" value="1"/>
</dbReference>
<dbReference type="PROSITE" id="PS01015">
    <property type="entry name" value="RIBOSOMAL_L19"/>
    <property type="match status" value="1"/>
</dbReference>
<organism>
    <name type="scientific">Chlamydia muridarum (strain MoPn / Nigg)</name>
    <dbReference type="NCBI Taxonomy" id="243161"/>
    <lineage>
        <taxon>Bacteria</taxon>
        <taxon>Pseudomonadati</taxon>
        <taxon>Chlamydiota</taxon>
        <taxon>Chlamydiia</taxon>
        <taxon>Chlamydiales</taxon>
        <taxon>Chlamydiaceae</taxon>
        <taxon>Chlamydia/Chlamydophila group</taxon>
        <taxon>Chlamydia</taxon>
    </lineage>
</organism>
<feature type="chain" id="PRO_0000163436" description="Large ribosomal subunit protein bL19">
    <location>
        <begin position="1"/>
        <end position="121"/>
    </location>
</feature>